<comment type="function">
    <text evidence="1 2">Component of the large ribosomal subunit. The ribosome is a large ribonucleoprotein complex responsible for the synthesis of proteins in the cell.</text>
</comment>
<comment type="subunit">
    <text evidence="1 2">Component of the large ribosomal subunit.</text>
</comment>
<comment type="interaction">
    <interactant intactId="EBI-359141">
        <id>P63173</id>
    </interactant>
    <interactant intactId="EBI-711154">
        <id>Q9P287</id>
        <label>BCCIP</label>
    </interactant>
    <organismsDiffer>false</organismsDiffer>
    <experiments>3</experiments>
</comment>
<comment type="subcellular location">
    <subcellularLocation>
        <location evidence="1">Cytoplasm</location>
    </subcellularLocation>
</comment>
<comment type="similarity">
    <text evidence="4">Belongs to the eukaryotic ribosomal protein eL38 family.</text>
</comment>
<feature type="chain" id="PRO_0000215434" description="Large ribosomal subunit protein eL38">
    <location>
        <begin position="1"/>
        <end position="70"/>
    </location>
</feature>
<feature type="modified residue" description="N6-acetyllysine; alternate" evidence="9">
    <location>
        <position position="9"/>
    </location>
</feature>
<feature type="modified residue" description="N6-acetyllysine" evidence="9">
    <location>
        <position position="67"/>
    </location>
</feature>
<feature type="cross-link" description="Glycyl lysine isopeptide (Lys-Gly) (interchain with G-Cter in SUMO2)" evidence="10">
    <location>
        <position position="4"/>
    </location>
</feature>
<feature type="cross-link" description="Glycyl lysine isopeptide (Lys-Gly) (interchain with G-Cter in SUMO2); alternate" evidence="10">
    <location>
        <position position="9"/>
    </location>
</feature>
<proteinExistence type="evidence at protein level"/>
<organism>
    <name type="scientific">Homo sapiens</name>
    <name type="common">Human</name>
    <dbReference type="NCBI Taxonomy" id="9606"/>
    <lineage>
        <taxon>Eukaryota</taxon>
        <taxon>Metazoa</taxon>
        <taxon>Chordata</taxon>
        <taxon>Craniata</taxon>
        <taxon>Vertebrata</taxon>
        <taxon>Euteleostomi</taxon>
        <taxon>Mammalia</taxon>
        <taxon>Eutheria</taxon>
        <taxon>Euarchontoglires</taxon>
        <taxon>Primates</taxon>
        <taxon>Haplorrhini</taxon>
        <taxon>Catarrhini</taxon>
        <taxon>Hominidae</taxon>
        <taxon>Homo</taxon>
    </lineage>
</organism>
<reference key="1">
    <citation type="journal article" date="1997" name="Biochim. Biophys. Acta">
        <title>Primary sequence of the human, lysine-rich, ribosomal protein RPL38 and detection of an unusual RPL38 processed pseudogene in the promoter region of the type-1 angiotensin II receptor gene.</title>
        <authorList>
            <person name="Espinosa L."/>
            <person name="Martin M."/>
            <person name="Nicolas A."/>
            <person name="Fabre M."/>
            <person name="Navarro E."/>
        </authorList>
    </citation>
    <scope>NUCLEOTIDE SEQUENCE [MRNA]</scope>
</reference>
<reference key="2">
    <citation type="journal article" date="2004" name="Nat. Genet.">
        <title>Complete sequencing and characterization of 21,243 full-length human cDNAs.</title>
        <authorList>
            <person name="Ota T."/>
            <person name="Suzuki Y."/>
            <person name="Nishikawa T."/>
            <person name="Otsuki T."/>
            <person name="Sugiyama T."/>
            <person name="Irie R."/>
            <person name="Wakamatsu A."/>
            <person name="Hayashi K."/>
            <person name="Sato H."/>
            <person name="Nagai K."/>
            <person name="Kimura K."/>
            <person name="Makita H."/>
            <person name="Sekine M."/>
            <person name="Obayashi M."/>
            <person name="Nishi T."/>
            <person name="Shibahara T."/>
            <person name="Tanaka T."/>
            <person name="Ishii S."/>
            <person name="Yamamoto J."/>
            <person name="Saito K."/>
            <person name="Kawai Y."/>
            <person name="Isono Y."/>
            <person name="Nakamura Y."/>
            <person name="Nagahari K."/>
            <person name="Murakami K."/>
            <person name="Yasuda T."/>
            <person name="Iwayanagi T."/>
            <person name="Wagatsuma M."/>
            <person name="Shiratori A."/>
            <person name="Sudo H."/>
            <person name="Hosoiri T."/>
            <person name="Kaku Y."/>
            <person name="Kodaira H."/>
            <person name="Kondo H."/>
            <person name="Sugawara M."/>
            <person name="Takahashi M."/>
            <person name="Kanda K."/>
            <person name="Yokoi T."/>
            <person name="Furuya T."/>
            <person name="Kikkawa E."/>
            <person name="Omura Y."/>
            <person name="Abe K."/>
            <person name="Kamihara K."/>
            <person name="Katsuta N."/>
            <person name="Sato K."/>
            <person name="Tanikawa M."/>
            <person name="Yamazaki M."/>
            <person name="Ninomiya K."/>
            <person name="Ishibashi T."/>
            <person name="Yamashita H."/>
            <person name="Murakawa K."/>
            <person name="Fujimori K."/>
            <person name="Tanai H."/>
            <person name="Kimata M."/>
            <person name="Watanabe M."/>
            <person name="Hiraoka S."/>
            <person name="Chiba Y."/>
            <person name="Ishida S."/>
            <person name="Ono Y."/>
            <person name="Takiguchi S."/>
            <person name="Watanabe S."/>
            <person name="Yosida M."/>
            <person name="Hotuta T."/>
            <person name="Kusano J."/>
            <person name="Kanehori K."/>
            <person name="Takahashi-Fujii A."/>
            <person name="Hara H."/>
            <person name="Tanase T.-O."/>
            <person name="Nomura Y."/>
            <person name="Togiya S."/>
            <person name="Komai F."/>
            <person name="Hara R."/>
            <person name="Takeuchi K."/>
            <person name="Arita M."/>
            <person name="Imose N."/>
            <person name="Musashino K."/>
            <person name="Yuuki H."/>
            <person name="Oshima A."/>
            <person name="Sasaki N."/>
            <person name="Aotsuka S."/>
            <person name="Yoshikawa Y."/>
            <person name="Matsunawa H."/>
            <person name="Ichihara T."/>
            <person name="Shiohata N."/>
            <person name="Sano S."/>
            <person name="Moriya S."/>
            <person name="Momiyama H."/>
            <person name="Satoh N."/>
            <person name="Takami S."/>
            <person name="Terashima Y."/>
            <person name="Suzuki O."/>
            <person name="Nakagawa S."/>
            <person name="Senoh A."/>
            <person name="Mizoguchi H."/>
            <person name="Goto Y."/>
            <person name="Shimizu F."/>
            <person name="Wakebe H."/>
            <person name="Hishigaki H."/>
            <person name="Watanabe T."/>
            <person name="Sugiyama A."/>
            <person name="Takemoto M."/>
            <person name="Kawakami B."/>
            <person name="Yamazaki M."/>
            <person name="Watanabe K."/>
            <person name="Kumagai A."/>
            <person name="Itakura S."/>
            <person name="Fukuzumi Y."/>
            <person name="Fujimori Y."/>
            <person name="Komiyama M."/>
            <person name="Tashiro H."/>
            <person name="Tanigami A."/>
            <person name="Fujiwara T."/>
            <person name="Ono T."/>
            <person name="Yamada K."/>
            <person name="Fujii Y."/>
            <person name="Ozaki K."/>
            <person name="Hirao M."/>
            <person name="Ohmori Y."/>
            <person name="Kawabata A."/>
            <person name="Hikiji T."/>
            <person name="Kobatake N."/>
            <person name="Inagaki H."/>
            <person name="Ikema Y."/>
            <person name="Okamoto S."/>
            <person name="Okitani R."/>
            <person name="Kawakami T."/>
            <person name="Noguchi S."/>
            <person name="Itoh T."/>
            <person name="Shigeta K."/>
            <person name="Senba T."/>
            <person name="Matsumura K."/>
            <person name="Nakajima Y."/>
            <person name="Mizuno T."/>
            <person name="Morinaga M."/>
            <person name="Sasaki M."/>
            <person name="Togashi T."/>
            <person name="Oyama M."/>
            <person name="Hata H."/>
            <person name="Watanabe M."/>
            <person name="Komatsu T."/>
            <person name="Mizushima-Sugano J."/>
            <person name="Satoh T."/>
            <person name="Shirai Y."/>
            <person name="Takahashi Y."/>
            <person name="Nakagawa K."/>
            <person name="Okumura K."/>
            <person name="Nagase T."/>
            <person name="Nomura N."/>
            <person name="Kikuchi H."/>
            <person name="Masuho Y."/>
            <person name="Yamashita R."/>
            <person name="Nakai K."/>
            <person name="Yada T."/>
            <person name="Nakamura Y."/>
            <person name="Ohara O."/>
            <person name="Isogai T."/>
            <person name="Sugano S."/>
        </authorList>
    </citation>
    <scope>NUCLEOTIDE SEQUENCE [LARGE SCALE MRNA]</scope>
    <source>
        <tissue>Thymus</tissue>
    </source>
</reference>
<reference key="3">
    <citation type="submission" date="2005-07" db="EMBL/GenBank/DDBJ databases">
        <authorList>
            <person name="Mural R.J."/>
            <person name="Istrail S."/>
            <person name="Sutton G.G."/>
            <person name="Florea L."/>
            <person name="Halpern A.L."/>
            <person name="Mobarry C.M."/>
            <person name="Lippert R."/>
            <person name="Walenz B."/>
            <person name="Shatkay H."/>
            <person name="Dew I."/>
            <person name="Miller J.R."/>
            <person name="Flanigan M.J."/>
            <person name="Edwards N.J."/>
            <person name="Bolanos R."/>
            <person name="Fasulo D."/>
            <person name="Halldorsson B.V."/>
            <person name="Hannenhalli S."/>
            <person name="Turner R."/>
            <person name="Yooseph S."/>
            <person name="Lu F."/>
            <person name="Nusskern D.R."/>
            <person name="Shue B.C."/>
            <person name="Zheng X.H."/>
            <person name="Zhong F."/>
            <person name="Delcher A.L."/>
            <person name="Huson D.H."/>
            <person name="Kravitz S.A."/>
            <person name="Mouchard L."/>
            <person name="Reinert K."/>
            <person name="Remington K.A."/>
            <person name="Clark A.G."/>
            <person name="Waterman M.S."/>
            <person name="Eichler E.E."/>
            <person name="Adams M.D."/>
            <person name="Hunkapiller M.W."/>
            <person name="Myers E.W."/>
            <person name="Venter J.C."/>
        </authorList>
    </citation>
    <scope>NUCLEOTIDE SEQUENCE [LARGE SCALE GENOMIC DNA]</scope>
</reference>
<reference key="4">
    <citation type="journal article" date="2004" name="Genome Res.">
        <title>The status, quality, and expansion of the NIH full-length cDNA project: the Mammalian Gene Collection (MGC).</title>
        <authorList>
            <consortium name="The MGC Project Team"/>
        </authorList>
    </citation>
    <scope>NUCLEOTIDE SEQUENCE [LARGE SCALE MRNA]</scope>
    <source>
        <tissue>Skin</tissue>
    </source>
</reference>
<reference key="5">
    <citation type="journal article" date="1998" name="Genome Res.">
        <title>A map of 75 human ribosomal protein genes.</title>
        <authorList>
            <person name="Kenmochi N."/>
            <person name="Kawaguchi T."/>
            <person name="Rozen S."/>
            <person name="Davis E."/>
            <person name="Goodman N."/>
            <person name="Hudson T.J."/>
            <person name="Tanaka T."/>
            <person name="Page D.C."/>
        </authorList>
    </citation>
    <scope>NUCLEOTIDE SEQUENCE [GENOMIC DNA] OF 34-70</scope>
</reference>
<reference key="6">
    <citation type="journal article" date="2003" name="Nature">
        <title>Proteomic characterization of the human centrosome by protein correlation profiling.</title>
        <authorList>
            <person name="Andersen J.S."/>
            <person name="Wilkinson C.J."/>
            <person name="Mayor T."/>
            <person name="Mortensen P."/>
            <person name="Nigg E.A."/>
            <person name="Mann M."/>
        </authorList>
    </citation>
    <scope>IDENTIFICATION BY MASS SPECTROMETRY</scope>
    <source>
        <tissue>Lymphoblast</tissue>
    </source>
</reference>
<reference key="7">
    <citation type="journal article" date="2009" name="Science">
        <title>Lysine acetylation targets protein complexes and co-regulates major cellular functions.</title>
        <authorList>
            <person name="Choudhary C."/>
            <person name="Kumar C."/>
            <person name="Gnad F."/>
            <person name="Nielsen M.L."/>
            <person name="Rehman M."/>
            <person name="Walther T.C."/>
            <person name="Olsen J.V."/>
            <person name="Mann M."/>
        </authorList>
    </citation>
    <scope>ACETYLATION [LARGE SCALE ANALYSIS] AT LYS-9 AND LYS-67</scope>
    <scope>IDENTIFICATION BY MASS SPECTROMETRY [LARGE SCALE ANALYSIS]</scope>
</reference>
<reference key="8">
    <citation type="journal article" date="2011" name="BMC Syst. Biol.">
        <title>Initial characterization of the human central proteome.</title>
        <authorList>
            <person name="Burkard T.R."/>
            <person name="Planyavsky M."/>
            <person name="Kaupe I."/>
            <person name="Breitwieser F.P."/>
            <person name="Buerckstuemmer T."/>
            <person name="Bennett K.L."/>
            <person name="Superti-Furga G."/>
            <person name="Colinge J."/>
        </authorList>
    </citation>
    <scope>IDENTIFICATION BY MASS SPECTROMETRY [LARGE SCALE ANALYSIS]</scope>
</reference>
<reference key="9">
    <citation type="journal article" date="2014" name="Curr. Opin. Struct. Biol.">
        <title>A new system for naming ribosomal proteins.</title>
        <authorList>
            <person name="Ban N."/>
            <person name="Beckmann R."/>
            <person name="Cate J.H.D."/>
            <person name="Dinman J.D."/>
            <person name="Dragon F."/>
            <person name="Ellis S.R."/>
            <person name="Lafontaine D.L.J."/>
            <person name="Lindahl L."/>
            <person name="Liljas A."/>
            <person name="Lipton J.M."/>
            <person name="McAlear M.A."/>
            <person name="Moore P.B."/>
            <person name="Noller H.F."/>
            <person name="Ortega J."/>
            <person name="Panse V.G."/>
            <person name="Ramakrishnan V."/>
            <person name="Spahn C.M.T."/>
            <person name="Steitz T.A."/>
            <person name="Tchorzewski M."/>
            <person name="Tollervey D."/>
            <person name="Warren A.J."/>
            <person name="Williamson J.R."/>
            <person name="Wilson D."/>
            <person name="Yonath A."/>
            <person name="Yusupov M."/>
        </authorList>
    </citation>
    <scope>NOMENCLATURE</scope>
</reference>
<reference key="10">
    <citation type="journal article" date="2015" name="Proteomics">
        <title>N-terminome analysis of the human mitochondrial proteome.</title>
        <authorList>
            <person name="Vaca Jacome A.S."/>
            <person name="Rabilloud T."/>
            <person name="Schaeffer-Reiss C."/>
            <person name="Rompais M."/>
            <person name="Ayoub D."/>
            <person name="Lane L."/>
            <person name="Bairoch A."/>
            <person name="Van Dorsselaer A."/>
            <person name="Carapito C."/>
        </authorList>
    </citation>
    <scope>IDENTIFICATION BY MASS SPECTROMETRY [LARGE SCALE ANALYSIS]</scope>
</reference>
<reference key="11">
    <citation type="journal article" date="2017" name="Nat. Struct. Mol. Biol.">
        <title>Site-specific mapping of the human SUMO proteome reveals co-modification with phosphorylation.</title>
        <authorList>
            <person name="Hendriks I.A."/>
            <person name="Lyon D."/>
            <person name="Young C."/>
            <person name="Jensen L.J."/>
            <person name="Vertegaal A.C."/>
            <person name="Nielsen M.L."/>
        </authorList>
    </citation>
    <scope>SUMOYLATION [LARGE SCALE ANALYSIS] AT LYS-4 AND LYS-9</scope>
    <scope>IDENTIFICATION BY MASS SPECTROMETRY [LARGE SCALE ANALYSIS]</scope>
</reference>
<reference key="12">
    <citation type="journal article" date="2013" name="Nature">
        <title>Structures of the human and Drosophila 80S ribosome.</title>
        <authorList>
            <person name="Anger A.M."/>
            <person name="Armache J.P."/>
            <person name="Berninghausen O."/>
            <person name="Habeck M."/>
            <person name="Subklewe M."/>
            <person name="Wilson D.N."/>
            <person name="Beckmann R."/>
        </authorList>
    </citation>
    <scope>STRUCTURE BY ELECTRON MICROSCOPY (5.0 ANGSTROMS)</scope>
    <scope>FUNCTION</scope>
    <scope>SUBUNIT</scope>
    <scope>SUBCELLULAR LOCATION</scope>
</reference>
<reference evidence="5 6 7 8" key="13">
    <citation type="journal article" date="2020" name="Nat. Commun.">
        <title>Structural snapshots of human pre-60S ribosomal particles before and after nuclear export.</title>
        <authorList>
            <person name="Liang X."/>
            <person name="Zuo M.Q."/>
            <person name="Zhang Y."/>
            <person name="Li N."/>
            <person name="Ma C."/>
            <person name="Dong M.Q."/>
            <person name="Gao N."/>
        </authorList>
    </citation>
    <scope>STRUCTURE BY ELECTRON MICROSCOPY (3.09 ANGSTROMS)</scope>
    <scope>FUNCTION</scope>
    <scope>SUBUNIT</scope>
</reference>
<accession>P63173</accession>
<accession>B2R5A8</accession>
<accession>P23411</accession>
<gene>
    <name type="primary">RPL38</name>
</gene>
<dbReference type="EMBL" id="Z26876">
    <property type="protein sequence ID" value="CAA81488.1"/>
    <property type="molecule type" value="mRNA"/>
</dbReference>
<dbReference type="EMBL" id="AK312119">
    <property type="protein sequence ID" value="BAG35055.1"/>
    <property type="molecule type" value="mRNA"/>
</dbReference>
<dbReference type="EMBL" id="CH471099">
    <property type="protein sequence ID" value="EAW89137.1"/>
    <property type="molecule type" value="Genomic_DNA"/>
</dbReference>
<dbReference type="EMBL" id="BC000603">
    <property type="protein sequence ID" value="AAH00603.1"/>
    <property type="molecule type" value="mRNA"/>
</dbReference>
<dbReference type="EMBL" id="AB007185">
    <property type="protein sequence ID" value="BAA25844.1"/>
    <property type="molecule type" value="Genomic_DNA"/>
</dbReference>
<dbReference type="CCDS" id="CCDS11696.1"/>
<dbReference type="PIR" id="S38385">
    <property type="entry name" value="S38385"/>
</dbReference>
<dbReference type="RefSeq" id="NP_000990.1">
    <property type="nucleotide sequence ID" value="NM_000999.4"/>
</dbReference>
<dbReference type="RefSeq" id="NP_001030335.1">
    <property type="nucleotide sequence ID" value="NM_001035258.2"/>
</dbReference>
<dbReference type="PDB" id="4UG0">
    <property type="method" value="EM"/>
    <property type="chains" value="Lk=1-70"/>
</dbReference>
<dbReference type="PDB" id="4V6X">
    <property type="method" value="EM"/>
    <property type="resolution" value="5.00 A"/>
    <property type="chains" value="Ck=1-70"/>
</dbReference>
<dbReference type="PDB" id="5AJ0">
    <property type="method" value="EM"/>
    <property type="resolution" value="3.50 A"/>
    <property type="chains" value="Ak=1-70"/>
</dbReference>
<dbReference type="PDB" id="5LKS">
    <property type="method" value="EM"/>
    <property type="resolution" value="3.60 A"/>
    <property type="chains" value="Lk=1-70"/>
</dbReference>
<dbReference type="PDB" id="5T2C">
    <property type="method" value="EM"/>
    <property type="resolution" value="3.60 A"/>
    <property type="chains" value="e=1-70"/>
</dbReference>
<dbReference type="PDB" id="6IP5">
    <property type="method" value="EM"/>
    <property type="resolution" value="3.90 A"/>
    <property type="chains" value="2e=1-70"/>
</dbReference>
<dbReference type="PDB" id="6IP6">
    <property type="method" value="EM"/>
    <property type="resolution" value="4.50 A"/>
    <property type="chains" value="2e=1-70"/>
</dbReference>
<dbReference type="PDB" id="6IP8">
    <property type="method" value="EM"/>
    <property type="resolution" value="3.90 A"/>
    <property type="chains" value="2e=1-70"/>
</dbReference>
<dbReference type="PDB" id="6LQM">
    <property type="method" value="EM"/>
    <property type="resolution" value="3.09 A"/>
    <property type="chains" value="O=1-70"/>
</dbReference>
<dbReference type="PDB" id="6LSR">
    <property type="method" value="EM"/>
    <property type="resolution" value="3.13 A"/>
    <property type="chains" value="O=1-70"/>
</dbReference>
<dbReference type="PDB" id="6LSS">
    <property type="method" value="EM"/>
    <property type="resolution" value="3.23 A"/>
    <property type="chains" value="O=1-70"/>
</dbReference>
<dbReference type="PDB" id="6LU8">
    <property type="method" value="EM"/>
    <property type="resolution" value="3.13 A"/>
    <property type="chains" value="O=1-70"/>
</dbReference>
<dbReference type="PDB" id="6OLE">
    <property type="method" value="EM"/>
    <property type="resolution" value="3.10 A"/>
    <property type="chains" value="l=2-70"/>
</dbReference>
<dbReference type="PDB" id="6OLF">
    <property type="method" value="EM"/>
    <property type="resolution" value="3.90 A"/>
    <property type="chains" value="l=2-70"/>
</dbReference>
<dbReference type="PDB" id="6OLG">
    <property type="method" value="EM"/>
    <property type="resolution" value="3.40 A"/>
    <property type="chains" value="Ak=2-70"/>
</dbReference>
<dbReference type="PDB" id="6OLI">
    <property type="method" value="EM"/>
    <property type="resolution" value="3.50 A"/>
    <property type="chains" value="l=2-70"/>
</dbReference>
<dbReference type="PDB" id="6OLZ">
    <property type="method" value="EM"/>
    <property type="resolution" value="3.90 A"/>
    <property type="chains" value="Ak=2-70"/>
</dbReference>
<dbReference type="PDB" id="6OM0">
    <property type="method" value="EM"/>
    <property type="resolution" value="3.10 A"/>
    <property type="chains" value="l=2-70"/>
</dbReference>
<dbReference type="PDB" id="6OM7">
    <property type="method" value="EM"/>
    <property type="resolution" value="3.70 A"/>
    <property type="chains" value="l=2-70"/>
</dbReference>
<dbReference type="PDB" id="6QZP">
    <property type="method" value="EM"/>
    <property type="resolution" value="2.90 A"/>
    <property type="chains" value="Lk=2-70"/>
</dbReference>
<dbReference type="PDB" id="6SXO">
    <property type="method" value="EM"/>
    <property type="resolution" value="3.30 A"/>
    <property type="chains" value="Lk=1-70"/>
</dbReference>
<dbReference type="PDB" id="6W6L">
    <property type="method" value="EM"/>
    <property type="resolution" value="3.84 A"/>
    <property type="chains" value="l=1-70"/>
</dbReference>
<dbReference type="PDB" id="6XA1">
    <property type="method" value="EM"/>
    <property type="resolution" value="2.80 A"/>
    <property type="chains" value="Lk=2-70"/>
</dbReference>
<dbReference type="PDB" id="6Y0G">
    <property type="method" value="EM"/>
    <property type="resolution" value="3.20 A"/>
    <property type="chains" value="Lk=1-70"/>
</dbReference>
<dbReference type="PDB" id="6Y2L">
    <property type="method" value="EM"/>
    <property type="resolution" value="3.00 A"/>
    <property type="chains" value="Lk=1-70"/>
</dbReference>
<dbReference type="PDB" id="6Y57">
    <property type="method" value="EM"/>
    <property type="resolution" value="3.50 A"/>
    <property type="chains" value="Lk=1-70"/>
</dbReference>
<dbReference type="PDB" id="6Y6X">
    <property type="method" value="EM"/>
    <property type="resolution" value="2.80 A"/>
    <property type="chains" value="Lk=2-70"/>
</dbReference>
<dbReference type="PDB" id="6Z6L">
    <property type="method" value="EM"/>
    <property type="resolution" value="3.00 A"/>
    <property type="chains" value="Lk=1-70"/>
</dbReference>
<dbReference type="PDB" id="6Z6M">
    <property type="method" value="EM"/>
    <property type="resolution" value="3.10 A"/>
    <property type="chains" value="Lk=1-70"/>
</dbReference>
<dbReference type="PDB" id="6Z6N">
    <property type="method" value="EM"/>
    <property type="resolution" value="2.90 A"/>
    <property type="chains" value="Lk=1-70"/>
</dbReference>
<dbReference type="PDB" id="6ZM7">
    <property type="method" value="EM"/>
    <property type="resolution" value="2.70 A"/>
    <property type="chains" value="Lk=1-70"/>
</dbReference>
<dbReference type="PDB" id="6ZME">
    <property type="method" value="EM"/>
    <property type="resolution" value="3.00 A"/>
    <property type="chains" value="Lk=1-70"/>
</dbReference>
<dbReference type="PDB" id="6ZMI">
    <property type="method" value="EM"/>
    <property type="resolution" value="2.60 A"/>
    <property type="chains" value="Lk=1-70"/>
</dbReference>
<dbReference type="PDB" id="6ZMO">
    <property type="method" value="EM"/>
    <property type="resolution" value="3.10 A"/>
    <property type="chains" value="Lk=1-70"/>
</dbReference>
<dbReference type="PDB" id="7BHP">
    <property type="method" value="EM"/>
    <property type="resolution" value="3.30 A"/>
    <property type="chains" value="Lk=1-70"/>
</dbReference>
<dbReference type="PDB" id="7F5S">
    <property type="method" value="EM"/>
    <property type="resolution" value="2.72 A"/>
    <property type="chains" value="Lk=1-70"/>
</dbReference>
<dbReference type="PDB" id="7OW7">
    <property type="method" value="EM"/>
    <property type="resolution" value="2.20 A"/>
    <property type="chains" value="e=1-70"/>
</dbReference>
<dbReference type="PDB" id="7XNX">
    <property type="method" value="EM"/>
    <property type="resolution" value="2.70 A"/>
    <property type="chains" value="Lk=1-70"/>
</dbReference>
<dbReference type="PDB" id="7XNY">
    <property type="method" value="EM"/>
    <property type="resolution" value="2.50 A"/>
    <property type="chains" value="Lk=1-70"/>
</dbReference>
<dbReference type="PDB" id="8A3D">
    <property type="method" value="EM"/>
    <property type="resolution" value="1.67 A"/>
    <property type="chains" value="e=1-70"/>
</dbReference>
<dbReference type="PDB" id="8FKZ">
    <property type="method" value="EM"/>
    <property type="resolution" value="3.04 A"/>
    <property type="chains" value="LY=1-70"/>
</dbReference>
<dbReference type="PDB" id="8FL2">
    <property type="method" value="EM"/>
    <property type="resolution" value="2.67 A"/>
    <property type="chains" value="LY=1-70"/>
</dbReference>
<dbReference type="PDB" id="8FL3">
    <property type="method" value="EM"/>
    <property type="resolution" value="2.53 A"/>
    <property type="chains" value="LY=1-70"/>
</dbReference>
<dbReference type="PDB" id="8FL4">
    <property type="method" value="EM"/>
    <property type="resolution" value="2.89 A"/>
    <property type="chains" value="LY=1-70"/>
</dbReference>
<dbReference type="PDB" id="8FL6">
    <property type="method" value="EM"/>
    <property type="resolution" value="2.62 A"/>
    <property type="chains" value="LY=1-70"/>
</dbReference>
<dbReference type="PDB" id="8FL7">
    <property type="method" value="EM"/>
    <property type="resolution" value="2.55 A"/>
    <property type="chains" value="LY=1-70"/>
</dbReference>
<dbReference type="PDB" id="8FL9">
    <property type="method" value="EM"/>
    <property type="resolution" value="2.75 A"/>
    <property type="chains" value="LY=1-70"/>
</dbReference>
<dbReference type="PDB" id="8FLA">
    <property type="method" value="EM"/>
    <property type="resolution" value="2.63 A"/>
    <property type="chains" value="LY=1-70"/>
</dbReference>
<dbReference type="PDB" id="8FLB">
    <property type="method" value="EM"/>
    <property type="resolution" value="2.55 A"/>
    <property type="chains" value="LY=1-70"/>
</dbReference>
<dbReference type="PDB" id="8FLC">
    <property type="method" value="EM"/>
    <property type="resolution" value="2.76 A"/>
    <property type="chains" value="LY=1-70"/>
</dbReference>
<dbReference type="PDB" id="8FLD">
    <property type="method" value="EM"/>
    <property type="resolution" value="2.58 A"/>
    <property type="chains" value="LY=1-70"/>
</dbReference>
<dbReference type="PDB" id="8FLE">
    <property type="method" value="EM"/>
    <property type="resolution" value="2.48 A"/>
    <property type="chains" value="LY=1-70"/>
</dbReference>
<dbReference type="PDB" id="8FLF">
    <property type="method" value="EM"/>
    <property type="resolution" value="2.65 A"/>
    <property type="chains" value="LY=1-70"/>
</dbReference>
<dbReference type="PDB" id="8G5Y">
    <property type="method" value="EM"/>
    <property type="resolution" value="2.29 A"/>
    <property type="chains" value="Lk=1-70"/>
</dbReference>
<dbReference type="PDB" id="8G5Z">
    <property type="method" value="EM"/>
    <property type="resolution" value="2.64 A"/>
    <property type="chains" value="Lk=2-70"/>
</dbReference>
<dbReference type="PDB" id="8G60">
    <property type="method" value="EM"/>
    <property type="resolution" value="2.54 A"/>
    <property type="chains" value="Lk=1-70"/>
</dbReference>
<dbReference type="PDB" id="8G61">
    <property type="method" value="EM"/>
    <property type="resolution" value="2.94 A"/>
    <property type="chains" value="Lk=1-70"/>
</dbReference>
<dbReference type="PDB" id="8G6J">
    <property type="method" value="EM"/>
    <property type="resolution" value="2.80 A"/>
    <property type="chains" value="Lk=1-70"/>
</dbReference>
<dbReference type="PDB" id="8GLP">
    <property type="method" value="EM"/>
    <property type="resolution" value="1.67 A"/>
    <property type="chains" value="Lk=1-70"/>
</dbReference>
<dbReference type="PDB" id="8IDT">
    <property type="method" value="EM"/>
    <property type="resolution" value="2.80 A"/>
    <property type="chains" value="O=1-70"/>
</dbReference>
<dbReference type="PDB" id="8IDY">
    <property type="method" value="EM"/>
    <property type="resolution" value="3.00 A"/>
    <property type="chains" value="O=1-70"/>
</dbReference>
<dbReference type="PDB" id="8IE3">
    <property type="method" value="EM"/>
    <property type="resolution" value="3.30 A"/>
    <property type="chains" value="O=1-70"/>
</dbReference>
<dbReference type="PDB" id="8IFD">
    <property type="method" value="EM"/>
    <property type="resolution" value="2.59 A"/>
    <property type="chains" value="2e=1-70"/>
</dbReference>
<dbReference type="PDB" id="8IFE">
    <property type="method" value="EM"/>
    <property type="resolution" value="2.57 A"/>
    <property type="chains" value="2e=1-70"/>
</dbReference>
<dbReference type="PDB" id="8INE">
    <property type="method" value="EM"/>
    <property type="resolution" value="3.20 A"/>
    <property type="chains" value="O=1-70"/>
</dbReference>
<dbReference type="PDB" id="8INF">
    <property type="method" value="EM"/>
    <property type="resolution" value="3.00 A"/>
    <property type="chains" value="O=1-70"/>
</dbReference>
<dbReference type="PDB" id="8INK">
    <property type="method" value="EM"/>
    <property type="resolution" value="3.20 A"/>
    <property type="chains" value="O=1-70"/>
</dbReference>
<dbReference type="PDB" id="8IPD">
    <property type="method" value="EM"/>
    <property type="resolution" value="3.20 A"/>
    <property type="chains" value="O=1-70"/>
</dbReference>
<dbReference type="PDB" id="8IPX">
    <property type="method" value="EM"/>
    <property type="resolution" value="4.30 A"/>
    <property type="chains" value="O=1-70"/>
</dbReference>
<dbReference type="PDB" id="8IPY">
    <property type="method" value="EM"/>
    <property type="resolution" value="3.20 A"/>
    <property type="chains" value="O=1-70"/>
</dbReference>
<dbReference type="PDB" id="8IR1">
    <property type="method" value="EM"/>
    <property type="resolution" value="3.30 A"/>
    <property type="chains" value="O=1-70"/>
</dbReference>
<dbReference type="PDB" id="8IR3">
    <property type="method" value="EM"/>
    <property type="resolution" value="3.50 A"/>
    <property type="chains" value="O=1-70"/>
</dbReference>
<dbReference type="PDB" id="8JDJ">
    <property type="method" value="EM"/>
    <property type="resolution" value="2.50 A"/>
    <property type="chains" value="p=1-70"/>
</dbReference>
<dbReference type="PDB" id="8JDK">
    <property type="method" value="EM"/>
    <property type="resolution" value="2.26 A"/>
    <property type="chains" value="p=1-70"/>
</dbReference>
<dbReference type="PDB" id="8JDL">
    <property type="method" value="EM"/>
    <property type="resolution" value="2.42 A"/>
    <property type="chains" value="p=1-70"/>
</dbReference>
<dbReference type="PDB" id="8JDM">
    <property type="method" value="EM"/>
    <property type="resolution" value="2.67 A"/>
    <property type="chains" value="p=1-70"/>
</dbReference>
<dbReference type="PDB" id="8K2C">
    <property type="method" value="EM"/>
    <property type="resolution" value="2.40 A"/>
    <property type="chains" value="Lk=1-70"/>
</dbReference>
<dbReference type="PDB" id="8OHD">
    <property type="method" value="EM"/>
    <property type="resolution" value="3.10 A"/>
    <property type="chains" value="Lk=1-70"/>
</dbReference>
<dbReference type="PDB" id="8OJ0">
    <property type="method" value="EM"/>
    <property type="resolution" value="3.30 A"/>
    <property type="chains" value="Lk=1-70"/>
</dbReference>
<dbReference type="PDB" id="8OJ5">
    <property type="method" value="EM"/>
    <property type="resolution" value="2.90 A"/>
    <property type="chains" value="Lk=1-70"/>
</dbReference>
<dbReference type="PDB" id="8OJ8">
    <property type="method" value="EM"/>
    <property type="resolution" value="3.30 A"/>
    <property type="chains" value="Lk=1-70"/>
</dbReference>
<dbReference type="PDB" id="8ONY">
    <property type="method" value="EM"/>
    <property type="resolution" value="2.92 A"/>
    <property type="chains" value="Lk=1-70"/>
</dbReference>
<dbReference type="PDB" id="8QFD">
    <property type="method" value="EM"/>
    <property type="resolution" value="2.20 A"/>
    <property type="chains" value="k=1-70"/>
</dbReference>
<dbReference type="PDB" id="8QOI">
    <property type="method" value="EM"/>
    <property type="resolution" value="1.90 A"/>
    <property type="chains" value="Lk=1-70"/>
</dbReference>
<dbReference type="PDB" id="8QYX">
    <property type="method" value="EM"/>
    <property type="resolution" value="1.78 A"/>
    <property type="chains" value="e1=1-70"/>
</dbReference>
<dbReference type="PDB" id="8RL2">
    <property type="method" value="EM"/>
    <property type="resolution" value="2.84 A"/>
    <property type="chains" value="Lk=1-70"/>
</dbReference>
<dbReference type="PDB" id="8UKB">
    <property type="method" value="EM"/>
    <property type="resolution" value="3.05 A"/>
    <property type="chains" value="Lk=2-70"/>
</dbReference>
<dbReference type="PDB" id="8XSX">
    <property type="method" value="EM"/>
    <property type="resolution" value="2.40 A"/>
    <property type="chains" value="Lk=1-70"/>
</dbReference>
<dbReference type="PDB" id="8XSY">
    <property type="method" value="EM"/>
    <property type="resolution" value="3.00 A"/>
    <property type="chains" value="Lk=1-70"/>
</dbReference>
<dbReference type="PDB" id="8XSZ">
    <property type="method" value="EM"/>
    <property type="resolution" value="3.20 A"/>
    <property type="chains" value="Lk=1-70"/>
</dbReference>
<dbReference type="PDB" id="8Y0W">
    <property type="method" value="EM"/>
    <property type="resolution" value="3.40 A"/>
    <property type="chains" value="Lk=1-70"/>
</dbReference>
<dbReference type="PDB" id="8Y0X">
    <property type="method" value="EM"/>
    <property type="resolution" value="3.30 A"/>
    <property type="chains" value="Lk=1-70"/>
</dbReference>
<dbReference type="PDB" id="8YOO">
    <property type="method" value="EM"/>
    <property type="resolution" value="2.00 A"/>
    <property type="chains" value="Lk=1-70"/>
</dbReference>
<dbReference type="PDB" id="8YOP">
    <property type="method" value="EM"/>
    <property type="resolution" value="2.20 A"/>
    <property type="chains" value="Lk=1-70"/>
</dbReference>
<dbReference type="PDB" id="9C3H">
    <property type="method" value="EM"/>
    <property type="resolution" value="2.00 A"/>
    <property type="chains" value="Lk=1-70"/>
</dbReference>
<dbReference type="PDB" id="9FPZ">
    <property type="method" value="EM"/>
    <property type="resolution" value="2.69 A"/>
    <property type="chains" value="Lk=1-70"/>
</dbReference>
<dbReference type="PDB" id="9FQ0">
    <property type="method" value="EM"/>
    <property type="resolution" value="4.67 A"/>
    <property type="chains" value="Lk=1-70"/>
</dbReference>
<dbReference type="PDB" id="9G8M">
    <property type="method" value="EM"/>
    <property type="resolution" value="3.30 A"/>
    <property type="chains" value="Lk=1-70"/>
</dbReference>
<dbReference type="PDB" id="9GMO">
    <property type="method" value="EM"/>
    <property type="resolution" value="2.59 A"/>
    <property type="chains" value="e=1-70"/>
</dbReference>
<dbReference type="PDBsum" id="4UG0"/>
<dbReference type="PDBsum" id="4V6X"/>
<dbReference type="PDBsum" id="5AJ0"/>
<dbReference type="PDBsum" id="5LKS"/>
<dbReference type="PDBsum" id="5T2C"/>
<dbReference type="PDBsum" id="6IP5"/>
<dbReference type="PDBsum" id="6IP6"/>
<dbReference type="PDBsum" id="6IP8"/>
<dbReference type="PDBsum" id="6LQM"/>
<dbReference type="PDBsum" id="6LSR"/>
<dbReference type="PDBsum" id="6LSS"/>
<dbReference type="PDBsum" id="6LU8"/>
<dbReference type="PDBsum" id="6OLE"/>
<dbReference type="PDBsum" id="6OLF"/>
<dbReference type="PDBsum" id="6OLG"/>
<dbReference type="PDBsum" id="6OLI"/>
<dbReference type="PDBsum" id="6OLZ"/>
<dbReference type="PDBsum" id="6OM0"/>
<dbReference type="PDBsum" id="6OM7"/>
<dbReference type="PDBsum" id="6QZP"/>
<dbReference type="PDBsum" id="6SXO"/>
<dbReference type="PDBsum" id="6W6L"/>
<dbReference type="PDBsum" id="6XA1"/>
<dbReference type="PDBsum" id="6Y0G"/>
<dbReference type="PDBsum" id="6Y2L"/>
<dbReference type="PDBsum" id="6Y57"/>
<dbReference type="PDBsum" id="6Y6X"/>
<dbReference type="PDBsum" id="6Z6L"/>
<dbReference type="PDBsum" id="6Z6M"/>
<dbReference type="PDBsum" id="6Z6N"/>
<dbReference type="PDBsum" id="6ZM7"/>
<dbReference type="PDBsum" id="6ZME"/>
<dbReference type="PDBsum" id="6ZMI"/>
<dbReference type="PDBsum" id="6ZMO"/>
<dbReference type="PDBsum" id="7BHP"/>
<dbReference type="PDBsum" id="7F5S"/>
<dbReference type="PDBsum" id="7OW7"/>
<dbReference type="PDBsum" id="7XNX"/>
<dbReference type="PDBsum" id="7XNY"/>
<dbReference type="PDBsum" id="8A3D"/>
<dbReference type="PDBsum" id="8FKZ"/>
<dbReference type="PDBsum" id="8FL2"/>
<dbReference type="PDBsum" id="8FL3"/>
<dbReference type="PDBsum" id="8FL4"/>
<dbReference type="PDBsum" id="8FL6"/>
<dbReference type="PDBsum" id="8FL7"/>
<dbReference type="PDBsum" id="8FL9"/>
<dbReference type="PDBsum" id="8FLA"/>
<dbReference type="PDBsum" id="8FLB"/>
<dbReference type="PDBsum" id="8FLC"/>
<dbReference type="PDBsum" id="8FLD"/>
<dbReference type="PDBsum" id="8FLE"/>
<dbReference type="PDBsum" id="8FLF"/>
<dbReference type="PDBsum" id="8G5Y"/>
<dbReference type="PDBsum" id="8G5Z"/>
<dbReference type="PDBsum" id="8G60"/>
<dbReference type="PDBsum" id="8G61"/>
<dbReference type="PDBsum" id="8G6J"/>
<dbReference type="PDBsum" id="8GLP"/>
<dbReference type="PDBsum" id="8IDT"/>
<dbReference type="PDBsum" id="8IDY"/>
<dbReference type="PDBsum" id="8IE3"/>
<dbReference type="PDBsum" id="8IFD"/>
<dbReference type="PDBsum" id="8IFE"/>
<dbReference type="PDBsum" id="8INE"/>
<dbReference type="PDBsum" id="8INF"/>
<dbReference type="PDBsum" id="8INK"/>
<dbReference type="PDBsum" id="8IPD"/>
<dbReference type="PDBsum" id="8IPX"/>
<dbReference type="PDBsum" id="8IPY"/>
<dbReference type="PDBsum" id="8IR1"/>
<dbReference type="PDBsum" id="8IR3"/>
<dbReference type="PDBsum" id="8JDJ"/>
<dbReference type="PDBsum" id="8JDK"/>
<dbReference type="PDBsum" id="8JDL"/>
<dbReference type="PDBsum" id="8JDM"/>
<dbReference type="PDBsum" id="8K2C"/>
<dbReference type="PDBsum" id="8OHD"/>
<dbReference type="PDBsum" id="8OJ0"/>
<dbReference type="PDBsum" id="8OJ5"/>
<dbReference type="PDBsum" id="8OJ8"/>
<dbReference type="PDBsum" id="8ONY"/>
<dbReference type="PDBsum" id="8QFD"/>
<dbReference type="PDBsum" id="8QOI"/>
<dbReference type="PDBsum" id="8QYX"/>
<dbReference type="PDBsum" id="8RL2"/>
<dbReference type="PDBsum" id="8UKB"/>
<dbReference type="PDBsum" id="8XSX"/>
<dbReference type="PDBsum" id="8XSY"/>
<dbReference type="PDBsum" id="8XSZ"/>
<dbReference type="PDBsum" id="8Y0W"/>
<dbReference type="PDBsum" id="8Y0X"/>
<dbReference type="PDBsum" id="8YOO"/>
<dbReference type="PDBsum" id="8YOP"/>
<dbReference type="PDBsum" id="9C3H"/>
<dbReference type="PDBsum" id="9FPZ"/>
<dbReference type="PDBsum" id="9FQ0"/>
<dbReference type="PDBsum" id="9G8M"/>
<dbReference type="PDBsum" id="9GMO"/>
<dbReference type="EMDB" id="EMD-0948"/>
<dbReference type="EMDB" id="EMD-0963"/>
<dbReference type="EMDB" id="EMD-0964"/>
<dbReference type="EMDB" id="EMD-0978"/>
<dbReference type="EMDB" id="EMD-10344"/>
<dbReference type="EMDB" id="EMD-10668"/>
<dbReference type="EMDB" id="EMD-10674"/>
<dbReference type="EMDB" id="EMD-10690"/>
<dbReference type="EMDB" id="EMD-10709"/>
<dbReference type="EMDB" id="EMD-11098"/>
<dbReference type="EMDB" id="EMD-11099"/>
<dbReference type="EMDB" id="EMD-11100"/>
<dbReference type="EMDB" id="EMD-11288"/>
<dbReference type="EMDB" id="EMD-11289"/>
<dbReference type="EMDB" id="EMD-11292"/>
<dbReference type="EMDB" id="EMD-11299"/>
<dbReference type="EMDB" id="EMD-12189"/>
<dbReference type="EMDB" id="EMD-13094"/>
<dbReference type="EMDB" id="EMD-15113"/>
<dbReference type="EMDB" id="EMD-16880"/>
<dbReference type="EMDB" id="EMD-16902"/>
<dbReference type="EMDB" id="EMD-16905"/>
<dbReference type="EMDB" id="EMD-16908"/>
<dbReference type="EMDB" id="EMD-17002"/>
<dbReference type="EMDB" id="EMD-18382"/>
<dbReference type="EMDB" id="EMD-18539"/>
<dbReference type="EMDB" id="EMD-18765"/>
<dbReference type="EMDB" id="EMD-19330"/>
<dbReference type="EMDB" id="EMD-29262"/>
<dbReference type="EMDB" id="EMD-29265"/>
<dbReference type="EMDB" id="EMD-29266"/>
<dbReference type="EMDB" id="EMD-29267"/>
<dbReference type="EMDB" id="EMD-29268"/>
<dbReference type="EMDB" id="EMD-29269"/>
<dbReference type="EMDB" id="EMD-29271"/>
<dbReference type="EMDB" id="EMD-29272"/>
<dbReference type="EMDB" id="EMD-29273"/>
<dbReference type="EMDB" id="EMD-29274"/>
<dbReference type="EMDB" id="EMD-29275"/>
<dbReference type="EMDB" id="EMD-29276"/>
<dbReference type="EMDB" id="EMD-29277"/>
<dbReference type="EMDB" id="EMD-29757"/>
<dbReference type="EMDB" id="EMD-29758"/>
<dbReference type="EMDB" id="EMD-29759"/>
<dbReference type="EMDB" id="EMD-29760"/>
<dbReference type="EMDB" id="EMD-29771"/>
<dbReference type="EMDB" id="EMD-31465"/>
<dbReference type="EMDB" id="EMD-33329"/>
<dbReference type="EMDB" id="EMD-33330"/>
<dbReference type="EMDB" id="EMD-35370"/>
<dbReference type="EMDB" id="EMD-35371"/>
<dbReference type="EMDB" id="EMD-35375"/>
<dbReference type="EMDB" id="EMD-35413"/>
<dbReference type="EMDB" id="EMD-35414"/>
<dbReference type="EMDB" id="EMD-35596"/>
<dbReference type="EMDB" id="EMD-35597"/>
<dbReference type="EMDB" id="EMD-35599"/>
<dbReference type="EMDB" id="EMD-35639"/>
<dbReference type="EMDB" id="EMD-35649"/>
<dbReference type="EMDB" id="EMD-35651"/>
<dbReference type="EMDB" id="EMD-35672"/>
<dbReference type="EMDB" id="EMD-35673"/>
<dbReference type="EMDB" id="EMD-36178"/>
<dbReference type="EMDB" id="EMD-36179"/>
<dbReference type="EMDB" id="EMD-36180"/>
<dbReference type="EMDB" id="EMD-36181"/>
<dbReference type="EMDB" id="EMD-36838"/>
<dbReference type="EMDB" id="EMD-38629"/>
<dbReference type="EMDB" id="EMD-38630"/>
<dbReference type="EMDB" id="EMD-38631"/>
<dbReference type="EMDB" id="EMD-3883"/>
<dbReference type="EMDB" id="EMD-39455"/>
<dbReference type="EMDB" id="EMD-39456"/>
<dbReference type="EMDB" id="EMD-40205"/>
<dbReference type="EMDB" id="EMD-4070"/>
<dbReference type="EMDB" id="EMD-42351"/>
<dbReference type="EMDB" id="EMD-45170"/>
<dbReference type="EMDB" id="EMD-50641"/>
<dbReference type="EMDB" id="EMD-50642"/>
<dbReference type="EMDB" id="EMD-51132"/>
<dbReference type="EMDB" id="EMD-51452"/>
<dbReference type="EMDB" id="EMD-9701"/>
<dbReference type="EMDB" id="EMD-9702"/>
<dbReference type="EMDB" id="EMD-9703"/>
<dbReference type="SMR" id="P63173"/>
<dbReference type="BioGRID" id="112088">
    <property type="interactions" value="346"/>
</dbReference>
<dbReference type="ComplexPortal" id="CPX-5183">
    <property type="entry name" value="60S cytosolic large ribosomal subunit"/>
</dbReference>
<dbReference type="ComplexPortal" id="CPX-7664">
    <property type="entry name" value="60S cytosolic large ribosomal subunit, testis-specific variant"/>
</dbReference>
<dbReference type="ComplexPortal" id="CPX-7665">
    <property type="entry name" value="60S cytosolic large ribosomal subunit, striated muscle variant"/>
</dbReference>
<dbReference type="CORUM" id="P63173"/>
<dbReference type="FunCoup" id="P63173">
    <property type="interactions" value="1022"/>
</dbReference>
<dbReference type="IntAct" id="P63173">
    <property type="interactions" value="106"/>
</dbReference>
<dbReference type="MINT" id="P63173"/>
<dbReference type="STRING" id="9606.ENSP00000309830"/>
<dbReference type="GlyGen" id="P63173">
    <property type="glycosylation" value="1 site, 1 O-linked glycan (1 site)"/>
</dbReference>
<dbReference type="iPTMnet" id="P63173"/>
<dbReference type="PhosphoSitePlus" id="P63173"/>
<dbReference type="SwissPalm" id="P63173"/>
<dbReference type="BioMuta" id="RPL38"/>
<dbReference type="DMDM" id="52783779"/>
<dbReference type="jPOST" id="P63173"/>
<dbReference type="MassIVE" id="P63173"/>
<dbReference type="PaxDb" id="9606-ENSP00000309830"/>
<dbReference type="PeptideAtlas" id="P63173"/>
<dbReference type="ProteomicsDB" id="57503"/>
<dbReference type="Pumba" id="P63173"/>
<dbReference type="TopDownProteomics" id="P63173"/>
<dbReference type="Antibodypedia" id="45939">
    <property type="antibodies" value="110 antibodies from 20 providers"/>
</dbReference>
<dbReference type="DNASU" id="6169"/>
<dbReference type="Ensembl" id="ENST00000311111.11">
    <property type="protein sequence ID" value="ENSP00000309830.6"/>
    <property type="gene ID" value="ENSG00000172809.13"/>
</dbReference>
<dbReference type="Ensembl" id="ENST00000439590.6">
    <property type="protein sequence ID" value="ENSP00000390279.2"/>
    <property type="gene ID" value="ENSG00000172809.13"/>
</dbReference>
<dbReference type="Ensembl" id="ENST00000533498.1">
    <property type="protein sequence ID" value="ENSP00000434243.1"/>
    <property type="gene ID" value="ENSG00000172809.13"/>
</dbReference>
<dbReference type="GeneID" id="6169"/>
<dbReference type="KEGG" id="hsa:6169"/>
<dbReference type="MANE-Select" id="ENST00000311111.11">
    <property type="protein sequence ID" value="ENSP00000309830.6"/>
    <property type="RefSeq nucleotide sequence ID" value="NM_000999.4"/>
    <property type="RefSeq protein sequence ID" value="NP_000990.1"/>
</dbReference>
<dbReference type="UCSC" id="uc002jjz.4">
    <property type="organism name" value="human"/>
</dbReference>
<dbReference type="AGR" id="HGNC:10349"/>
<dbReference type="CTD" id="6169"/>
<dbReference type="DisGeNET" id="6169"/>
<dbReference type="GeneCards" id="RPL38"/>
<dbReference type="HGNC" id="HGNC:10349">
    <property type="gene designation" value="RPL38"/>
</dbReference>
<dbReference type="HPA" id="ENSG00000172809">
    <property type="expression patterns" value="Low tissue specificity"/>
</dbReference>
<dbReference type="MIM" id="604182">
    <property type="type" value="gene"/>
</dbReference>
<dbReference type="neXtProt" id="NX_P63173"/>
<dbReference type="OpenTargets" id="ENSG00000172809"/>
<dbReference type="PharmGKB" id="PA34741"/>
<dbReference type="VEuPathDB" id="HostDB:ENSG00000172809"/>
<dbReference type="eggNOG" id="KOG3499">
    <property type="taxonomic scope" value="Eukaryota"/>
</dbReference>
<dbReference type="GeneTree" id="ENSGT00390000003718"/>
<dbReference type="InParanoid" id="P63173"/>
<dbReference type="OMA" id="RCHRFIY"/>
<dbReference type="OrthoDB" id="10250488at2759"/>
<dbReference type="PAN-GO" id="P63173">
    <property type="GO annotations" value="3 GO annotations based on evolutionary models"/>
</dbReference>
<dbReference type="PhylomeDB" id="P63173"/>
<dbReference type="TreeFam" id="TF300215"/>
<dbReference type="PathwayCommons" id="P63173"/>
<dbReference type="Reactome" id="R-HSA-156827">
    <property type="pathway name" value="L13a-mediated translational silencing of Ceruloplasmin expression"/>
</dbReference>
<dbReference type="Reactome" id="R-HSA-156902">
    <property type="pathway name" value="Peptide chain elongation"/>
</dbReference>
<dbReference type="Reactome" id="R-HSA-1799339">
    <property type="pathway name" value="SRP-dependent cotranslational protein targeting to membrane"/>
</dbReference>
<dbReference type="Reactome" id="R-HSA-192823">
    <property type="pathway name" value="Viral mRNA Translation"/>
</dbReference>
<dbReference type="Reactome" id="R-HSA-2408557">
    <property type="pathway name" value="Selenocysteine synthesis"/>
</dbReference>
<dbReference type="Reactome" id="R-HSA-6791226">
    <property type="pathway name" value="Major pathway of rRNA processing in the nucleolus and cytosol"/>
</dbReference>
<dbReference type="Reactome" id="R-HSA-72689">
    <property type="pathway name" value="Formation of a pool of free 40S subunits"/>
</dbReference>
<dbReference type="Reactome" id="R-HSA-72706">
    <property type="pathway name" value="GTP hydrolysis and joining of the 60S ribosomal subunit"/>
</dbReference>
<dbReference type="Reactome" id="R-HSA-72764">
    <property type="pathway name" value="Eukaryotic Translation Termination"/>
</dbReference>
<dbReference type="Reactome" id="R-HSA-9010553">
    <property type="pathway name" value="Regulation of expression of SLITs and ROBOs"/>
</dbReference>
<dbReference type="Reactome" id="R-HSA-9633012">
    <property type="pathway name" value="Response of EIF2AK4 (GCN2) to amino acid deficiency"/>
</dbReference>
<dbReference type="Reactome" id="R-HSA-975956">
    <property type="pathway name" value="Nonsense Mediated Decay (NMD) independent of the Exon Junction Complex (EJC)"/>
</dbReference>
<dbReference type="Reactome" id="R-HSA-975957">
    <property type="pathway name" value="Nonsense Mediated Decay (NMD) enhanced by the Exon Junction Complex (EJC)"/>
</dbReference>
<dbReference type="SignaLink" id="P63173"/>
<dbReference type="SIGNOR" id="P63173"/>
<dbReference type="BioGRID-ORCS" id="6169">
    <property type="hits" value="824 hits in 1160 CRISPR screens"/>
</dbReference>
<dbReference type="CD-CODE" id="91857CE7">
    <property type="entry name" value="Nucleolus"/>
</dbReference>
<dbReference type="CD-CODE" id="FB4E32DD">
    <property type="entry name" value="Presynaptic clusters and postsynaptic densities"/>
</dbReference>
<dbReference type="ChiTaRS" id="RPL38">
    <property type="organism name" value="human"/>
</dbReference>
<dbReference type="GeneWiki" id="60S_ribosomal_protein_L38"/>
<dbReference type="GenomeRNAi" id="6169"/>
<dbReference type="Pharos" id="P63173">
    <property type="development level" value="Tbio"/>
</dbReference>
<dbReference type="PRO" id="PR:P63173"/>
<dbReference type="Proteomes" id="UP000005640">
    <property type="component" value="Chromosome 17"/>
</dbReference>
<dbReference type="RNAct" id="P63173">
    <property type="molecule type" value="protein"/>
</dbReference>
<dbReference type="Bgee" id="ENSG00000172809">
    <property type="expression patterns" value="Expressed in calcaneal tendon and 212 other cell types or tissues"/>
</dbReference>
<dbReference type="ExpressionAtlas" id="P63173">
    <property type="expression patterns" value="baseline and differential"/>
</dbReference>
<dbReference type="GO" id="GO:0005737">
    <property type="term" value="C:cytoplasm"/>
    <property type="evidence" value="ECO:0000303"/>
    <property type="project" value="ComplexPortal"/>
</dbReference>
<dbReference type="GO" id="GO:0005829">
    <property type="term" value="C:cytosol"/>
    <property type="evidence" value="ECO:0000304"/>
    <property type="project" value="Reactome"/>
</dbReference>
<dbReference type="GO" id="GO:0022625">
    <property type="term" value="C:cytosolic large ribosomal subunit"/>
    <property type="evidence" value="ECO:0000314"/>
    <property type="project" value="UniProtKB"/>
</dbReference>
<dbReference type="GO" id="GO:0022626">
    <property type="term" value="C:cytosolic ribosome"/>
    <property type="evidence" value="ECO:0000314"/>
    <property type="project" value="FlyBase"/>
</dbReference>
<dbReference type="GO" id="GO:0033291">
    <property type="term" value="C:eukaryotic 80S initiation complex"/>
    <property type="evidence" value="ECO:0007669"/>
    <property type="project" value="Ensembl"/>
</dbReference>
<dbReference type="GO" id="GO:0005925">
    <property type="term" value="C:focal adhesion"/>
    <property type="evidence" value="ECO:0007005"/>
    <property type="project" value="UniProtKB"/>
</dbReference>
<dbReference type="GO" id="GO:0014069">
    <property type="term" value="C:postsynaptic density"/>
    <property type="evidence" value="ECO:0000314"/>
    <property type="project" value="SynGO"/>
</dbReference>
<dbReference type="GO" id="GO:0003723">
    <property type="term" value="F:RNA binding"/>
    <property type="evidence" value="ECO:0000304"/>
    <property type="project" value="ProtInc"/>
</dbReference>
<dbReference type="GO" id="GO:0003735">
    <property type="term" value="F:structural constituent of ribosome"/>
    <property type="evidence" value="ECO:0000314"/>
    <property type="project" value="UniProtKB"/>
</dbReference>
<dbReference type="GO" id="GO:0034463">
    <property type="term" value="P:90S preribosome assembly"/>
    <property type="evidence" value="ECO:0007669"/>
    <property type="project" value="Ensembl"/>
</dbReference>
<dbReference type="GO" id="GO:0048318">
    <property type="term" value="P:axial mesoderm development"/>
    <property type="evidence" value="ECO:0007669"/>
    <property type="project" value="Ensembl"/>
</dbReference>
<dbReference type="GO" id="GO:0002181">
    <property type="term" value="P:cytoplasmic translation"/>
    <property type="evidence" value="ECO:0000314"/>
    <property type="project" value="UniProtKB"/>
</dbReference>
<dbReference type="GO" id="GO:0042474">
    <property type="term" value="P:middle ear morphogenesis"/>
    <property type="evidence" value="ECO:0007669"/>
    <property type="project" value="Ensembl"/>
</dbReference>
<dbReference type="GO" id="GO:0001503">
    <property type="term" value="P:ossification"/>
    <property type="evidence" value="ECO:0007669"/>
    <property type="project" value="Ensembl"/>
</dbReference>
<dbReference type="GO" id="GO:0022618">
    <property type="term" value="P:protein-RNA complex assembly"/>
    <property type="evidence" value="ECO:0000318"/>
    <property type="project" value="GO_Central"/>
</dbReference>
<dbReference type="GO" id="GO:0006417">
    <property type="term" value="P:regulation of translation"/>
    <property type="evidence" value="ECO:0007669"/>
    <property type="project" value="Ensembl"/>
</dbReference>
<dbReference type="GO" id="GO:0007605">
    <property type="term" value="P:sensory perception of sound"/>
    <property type="evidence" value="ECO:0007669"/>
    <property type="project" value="Ensembl"/>
</dbReference>
<dbReference type="GO" id="GO:0001501">
    <property type="term" value="P:skeletal system development"/>
    <property type="evidence" value="ECO:0007669"/>
    <property type="project" value="Ensembl"/>
</dbReference>
<dbReference type="GO" id="GO:0006412">
    <property type="term" value="P:translation"/>
    <property type="evidence" value="ECO:0000304"/>
    <property type="project" value="ProtInc"/>
</dbReference>
<dbReference type="FunFam" id="3.30.720.90:FF:000001">
    <property type="entry name" value="60S ribosomal protein L38"/>
    <property type="match status" value="1"/>
</dbReference>
<dbReference type="Gene3D" id="3.30.720.90">
    <property type="match status" value="1"/>
</dbReference>
<dbReference type="InterPro" id="IPR002675">
    <property type="entry name" value="Ribosomal_eL38"/>
</dbReference>
<dbReference type="InterPro" id="IPR038464">
    <property type="entry name" value="Ribosomal_eL38_sf"/>
</dbReference>
<dbReference type="PANTHER" id="PTHR10965">
    <property type="entry name" value="60S RIBOSOMAL PROTEIN L38"/>
    <property type="match status" value="1"/>
</dbReference>
<dbReference type="PANTHER" id="PTHR10965:SF0">
    <property type="entry name" value="LARGE RIBOSOMAL SUBUNIT PROTEIN EL38"/>
    <property type="match status" value="1"/>
</dbReference>
<dbReference type="Pfam" id="PF01781">
    <property type="entry name" value="Ribosomal_L38e"/>
    <property type="match status" value="1"/>
</dbReference>
<evidence type="ECO:0000269" key="1">
    <source>
    </source>
</evidence>
<evidence type="ECO:0000269" key="2">
    <source>
    </source>
</evidence>
<evidence type="ECO:0000303" key="3">
    <source>
    </source>
</evidence>
<evidence type="ECO:0000305" key="4"/>
<evidence type="ECO:0007744" key="5">
    <source>
        <dbReference type="PDB" id="6LQM"/>
    </source>
</evidence>
<evidence type="ECO:0007744" key="6">
    <source>
        <dbReference type="PDB" id="6LSR"/>
    </source>
</evidence>
<evidence type="ECO:0007744" key="7">
    <source>
        <dbReference type="PDB" id="6LSS"/>
    </source>
</evidence>
<evidence type="ECO:0007744" key="8">
    <source>
        <dbReference type="PDB" id="6LU8"/>
    </source>
</evidence>
<evidence type="ECO:0007744" key="9">
    <source>
    </source>
</evidence>
<evidence type="ECO:0007744" key="10">
    <source>
    </source>
</evidence>
<sequence length="70" mass="8218">MPRKIEEIKDFLLTARRKDAKSVKIKKNKDNVKFKVRCSRYLYTLVITDKEKAEKLKQSLPPGLAVKELK</sequence>
<keyword id="KW-0002">3D-structure</keyword>
<keyword id="KW-0007">Acetylation</keyword>
<keyword id="KW-0963">Cytoplasm</keyword>
<keyword id="KW-1017">Isopeptide bond</keyword>
<keyword id="KW-1267">Proteomics identification</keyword>
<keyword id="KW-1185">Reference proteome</keyword>
<keyword id="KW-0687">Ribonucleoprotein</keyword>
<keyword id="KW-0689">Ribosomal protein</keyword>
<keyword id="KW-0832">Ubl conjugation</keyword>
<name>RL38_HUMAN</name>
<protein>
    <recommendedName>
        <fullName evidence="3">Large ribosomal subunit protein eL38</fullName>
    </recommendedName>
    <alternativeName>
        <fullName>60S ribosomal protein L38</fullName>
    </alternativeName>
</protein>